<gene>
    <name evidence="1" type="primary">uvrB</name>
    <name type="ordered locus">NGO_0573</name>
</gene>
<sequence>MEVIRYPNSPFKLHQPFPPAGDQPTAIAGLIEGLSDGLAYQTLLGVTGSGKTYTMANVIAQSGRPAIIMAHNKTLAAQLYAEMREFFPENAVEYFVSYYDYYQPEAYVPSRDLFIEKDSAINEHIEQMRLSATKNLMTRDDVIIVATVSAIYGIGDPTEYQQMVLSVKEGDTIEQRDIIATLVSMQYERGDLDFKRGSFRVRGDVIDVYPAESSENALRISLFDDEIDRLDMFDPLSGSLHQRVGRYTVFPSSHYVTPRDTVLRACESIKEELRERIEFFAREQRPVEQQRIEQRTRFDLEMLYEMGFCKGIENYSRHFSGKKEGEPPPTLMDYLPDNAIMFIDESHVTVTQIGGMYKGDASRKQNLVDYGFRLPSARDNRPLKFHEFEKVMPQTVFVSATPAKYEEEHAGQVVEQVVRPTGLVDPQTIIRPVATQVDDLMSEINDRIQKGERVLVTTLTKRMAEQLTDYYSELGIKVRYLHSDIDTVERVEIIRDLRLGLFDVLVGINLLREGLDIPEVSLVAILDADKEGFLRSHRSLIQTIGRAARNVNGVAILYADKITDSMKAAVDETERRREKQIKFNEEHGIVPQQIKKQVKDIIDGVYHEEDSGKGRRQGKNKVKVGEIHNEEDAIKEIAKLEKAMQQAARDLQFEEAAVLRDRISNIKENLLFGAE</sequence>
<feature type="chain" id="PRO_0000227332" description="UvrABC system protein B">
    <location>
        <begin position="1"/>
        <end position="675"/>
    </location>
</feature>
<feature type="domain" description="Helicase ATP-binding" evidence="1">
    <location>
        <begin position="32"/>
        <end position="417"/>
    </location>
</feature>
<feature type="domain" description="Helicase C-terminal" evidence="1">
    <location>
        <begin position="436"/>
        <end position="602"/>
    </location>
</feature>
<feature type="domain" description="UVR" evidence="1">
    <location>
        <begin position="634"/>
        <end position="669"/>
    </location>
</feature>
<feature type="short sequence motif" description="Beta-hairpin">
    <location>
        <begin position="98"/>
        <end position="121"/>
    </location>
</feature>
<feature type="binding site" evidence="1">
    <location>
        <begin position="45"/>
        <end position="52"/>
    </location>
    <ligand>
        <name>ATP</name>
        <dbReference type="ChEBI" id="CHEBI:30616"/>
    </ligand>
</feature>
<evidence type="ECO:0000255" key="1">
    <source>
        <dbReference type="HAMAP-Rule" id="MF_00204"/>
    </source>
</evidence>
<dbReference type="EMBL" id="AE004969">
    <property type="protein sequence ID" value="AAW89306.1"/>
    <property type="molecule type" value="Genomic_DNA"/>
</dbReference>
<dbReference type="RefSeq" id="WP_010951086.1">
    <property type="nucleotide sequence ID" value="NC_002946.2"/>
</dbReference>
<dbReference type="RefSeq" id="YP_207718.1">
    <property type="nucleotide sequence ID" value="NC_002946.2"/>
</dbReference>
<dbReference type="SMR" id="Q5F931"/>
<dbReference type="STRING" id="242231.NGO_0573"/>
<dbReference type="KEGG" id="ngo:NGO_0573"/>
<dbReference type="PATRIC" id="fig|242231.10.peg.678"/>
<dbReference type="HOGENOM" id="CLU_009621_2_1_4"/>
<dbReference type="Proteomes" id="UP000000535">
    <property type="component" value="Chromosome"/>
</dbReference>
<dbReference type="GO" id="GO:0005737">
    <property type="term" value="C:cytoplasm"/>
    <property type="evidence" value="ECO:0007669"/>
    <property type="project" value="UniProtKB-SubCell"/>
</dbReference>
<dbReference type="GO" id="GO:0009380">
    <property type="term" value="C:excinuclease repair complex"/>
    <property type="evidence" value="ECO:0007669"/>
    <property type="project" value="InterPro"/>
</dbReference>
<dbReference type="GO" id="GO:0005524">
    <property type="term" value="F:ATP binding"/>
    <property type="evidence" value="ECO:0007669"/>
    <property type="project" value="UniProtKB-UniRule"/>
</dbReference>
<dbReference type="GO" id="GO:0016887">
    <property type="term" value="F:ATP hydrolysis activity"/>
    <property type="evidence" value="ECO:0007669"/>
    <property type="project" value="InterPro"/>
</dbReference>
<dbReference type="GO" id="GO:0003677">
    <property type="term" value="F:DNA binding"/>
    <property type="evidence" value="ECO:0007669"/>
    <property type="project" value="UniProtKB-UniRule"/>
</dbReference>
<dbReference type="GO" id="GO:0009381">
    <property type="term" value="F:excinuclease ABC activity"/>
    <property type="evidence" value="ECO:0007669"/>
    <property type="project" value="UniProtKB-UniRule"/>
</dbReference>
<dbReference type="GO" id="GO:0006289">
    <property type="term" value="P:nucleotide-excision repair"/>
    <property type="evidence" value="ECO:0007669"/>
    <property type="project" value="UniProtKB-UniRule"/>
</dbReference>
<dbReference type="GO" id="GO:0009432">
    <property type="term" value="P:SOS response"/>
    <property type="evidence" value="ECO:0007669"/>
    <property type="project" value="UniProtKB-UniRule"/>
</dbReference>
<dbReference type="CDD" id="cd17916">
    <property type="entry name" value="DEXHc_UvrB"/>
    <property type="match status" value="1"/>
</dbReference>
<dbReference type="CDD" id="cd18790">
    <property type="entry name" value="SF2_C_UvrB"/>
    <property type="match status" value="1"/>
</dbReference>
<dbReference type="Gene3D" id="6.10.140.240">
    <property type="match status" value="1"/>
</dbReference>
<dbReference type="Gene3D" id="3.40.50.300">
    <property type="entry name" value="P-loop containing nucleotide triphosphate hydrolases"/>
    <property type="match status" value="3"/>
</dbReference>
<dbReference type="Gene3D" id="4.10.860.10">
    <property type="entry name" value="UVR domain"/>
    <property type="match status" value="1"/>
</dbReference>
<dbReference type="HAMAP" id="MF_00204">
    <property type="entry name" value="UvrB"/>
    <property type="match status" value="1"/>
</dbReference>
<dbReference type="InterPro" id="IPR006935">
    <property type="entry name" value="Helicase/UvrB_N"/>
</dbReference>
<dbReference type="InterPro" id="IPR014001">
    <property type="entry name" value="Helicase_ATP-bd"/>
</dbReference>
<dbReference type="InterPro" id="IPR001650">
    <property type="entry name" value="Helicase_C-like"/>
</dbReference>
<dbReference type="InterPro" id="IPR027417">
    <property type="entry name" value="P-loop_NTPase"/>
</dbReference>
<dbReference type="InterPro" id="IPR001943">
    <property type="entry name" value="UVR_dom"/>
</dbReference>
<dbReference type="InterPro" id="IPR036876">
    <property type="entry name" value="UVR_dom_sf"/>
</dbReference>
<dbReference type="InterPro" id="IPR004807">
    <property type="entry name" value="UvrB"/>
</dbReference>
<dbReference type="InterPro" id="IPR041471">
    <property type="entry name" value="UvrB_inter"/>
</dbReference>
<dbReference type="InterPro" id="IPR024759">
    <property type="entry name" value="UvrB_YAD/RRR_dom"/>
</dbReference>
<dbReference type="NCBIfam" id="NF003673">
    <property type="entry name" value="PRK05298.1"/>
    <property type="match status" value="1"/>
</dbReference>
<dbReference type="NCBIfam" id="TIGR00631">
    <property type="entry name" value="uvrb"/>
    <property type="match status" value="1"/>
</dbReference>
<dbReference type="PANTHER" id="PTHR24029">
    <property type="entry name" value="UVRABC SYSTEM PROTEIN B"/>
    <property type="match status" value="1"/>
</dbReference>
<dbReference type="PANTHER" id="PTHR24029:SF0">
    <property type="entry name" value="UVRABC SYSTEM PROTEIN B"/>
    <property type="match status" value="1"/>
</dbReference>
<dbReference type="Pfam" id="PF00271">
    <property type="entry name" value="Helicase_C"/>
    <property type="match status" value="1"/>
</dbReference>
<dbReference type="Pfam" id="PF04851">
    <property type="entry name" value="ResIII"/>
    <property type="match status" value="1"/>
</dbReference>
<dbReference type="Pfam" id="PF02151">
    <property type="entry name" value="UVR"/>
    <property type="match status" value="1"/>
</dbReference>
<dbReference type="Pfam" id="PF12344">
    <property type="entry name" value="UvrB"/>
    <property type="match status" value="1"/>
</dbReference>
<dbReference type="Pfam" id="PF17757">
    <property type="entry name" value="UvrB_inter"/>
    <property type="match status" value="1"/>
</dbReference>
<dbReference type="SMART" id="SM00487">
    <property type="entry name" value="DEXDc"/>
    <property type="match status" value="1"/>
</dbReference>
<dbReference type="SMART" id="SM00490">
    <property type="entry name" value="HELICc"/>
    <property type="match status" value="1"/>
</dbReference>
<dbReference type="SUPFAM" id="SSF46600">
    <property type="entry name" value="C-terminal UvrC-binding domain of UvrB"/>
    <property type="match status" value="1"/>
</dbReference>
<dbReference type="SUPFAM" id="SSF52540">
    <property type="entry name" value="P-loop containing nucleoside triphosphate hydrolases"/>
    <property type="match status" value="2"/>
</dbReference>
<dbReference type="PROSITE" id="PS51192">
    <property type="entry name" value="HELICASE_ATP_BIND_1"/>
    <property type="match status" value="1"/>
</dbReference>
<dbReference type="PROSITE" id="PS51194">
    <property type="entry name" value="HELICASE_CTER"/>
    <property type="match status" value="1"/>
</dbReference>
<dbReference type="PROSITE" id="PS50151">
    <property type="entry name" value="UVR"/>
    <property type="match status" value="1"/>
</dbReference>
<name>UVRB_NEIG1</name>
<organism>
    <name type="scientific">Neisseria gonorrhoeae (strain ATCC 700825 / FA 1090)</name>
    <dbReference type="NCBI Taxonomy" id="242231"/>
    <lineage>
        <taxon>Bacteria</taxon>
        <taxon>Pseudomonadati</taxon>
        <taxon>Pseudomonadota</taxon>
        <taxon>Betaproteobacteria</taxon>
        <taxon>Neisseriales</taxon>
        <taxon>Neisseriaceae</taxon>
        <taxon>Neisseria</taxon>
    </lineage>
</organism>
<comment type="function">
    <text evidence="1">The UvrABC repair system catalyzes the recognition and processing of DNA lesions. A damage recognition complex composed of 2 UvrA and 2 UvrB subunits scans DNA for abnormalities. Upon binding of the UvrA(2)B(2) complex to a putative damaged site, the DNA wraps around one UvrB monomer. DNA wrap is dependent on ATP binding by UvrB and probably causes local melting of the DNA helix, facilitating insertion of UvrB beta-hairpin between the DNA strands. Then UvrB probes one DNA strand for the presence of a lesion. If a lesion is found the UvrA subunits dissociate and the UvrB-DNA preincision complex is formed. This complex is subsequently bound by UvrC and the second UvrB is released. If no lesion is found, the DNA wraps around the other UvrB subunit that will check the other stand for damage.</text>
</comment>
<comment type="subunit">
    <text evidence="1">Forms a heterotetramer with UvrA during the search for lesions. Interacts with UvrC in an incision complex.</text>
</comment>
<comment type="subcellular location">
    <subcellularLocation>
        <location evidence="1">Cytoplasm</location>
    </subcellularLocation>
</comment>
<comment type="domain">
    <text evidence="1">The beta-hairpin motif is involved in DNA binding.</text>
</comment>
<comment type="similarity">
    <text evidence="1">Belongs to the UvrB family.</text>
</comment>
<protein>
    <recommendedName>
        <fullName evidence="1">UvrABC system protein B</fullName>
        <shortName evidence="1">Protein UvrB</shortName>
    </recommendedName>
    <alternativeName>
        <fullName evidence="1">Excinuclease ABC subunit B</fullName>
    </alternativeName>
</protein>
<keyword id="KW-0067">ATP-binding</keyword>
<keyword id="KW-0963">Cytoplasm</keyword>
<keyword id="KW-0227">DNA damage</keyword>
<keyword id="KW-0228">DNA excision</keyword>
<keyword id="KW-0234">DNA repair</keyword>
<keyword id="KW-0267">Excision nuclease</keyword>
<keyword id="KW-0547">Nucleotide-binding</keyword>
<keyword id="KW-1185">Reference proteome</keyword>
<keyword id="KW-0742">SOS response</keyword>
<proteinExistence type="inferred from homology"/>
<accession>Q5F931</accession>
<reference key="1">
    <citation type="submission" date="2003-03" db="EMBL/GenBank/DDBJ databases">
        <title>The complete genome sequence of Neisseria gonorrhoeae.</title>
        <authorList>
            <person name="Lewis L.A."/>
            <person name="Gillaspy A.F."/>
            <person name="McLaughlin R.E."/>
            <person name="Gipson M."/>
            <person name="Ducey T.F."/>
            <person name="Ownbey T."/>
            <person name="Hartman K."/>
            <person name="Nydick C."/>
            <person name="Carson M.B."/>
            <person name="Vaughn J."/>
            <person name="Thomson C."/>
            <person name="Song L."/>
            <person name="Lin S."/>
            <person name="Yuan X."/>
            <person name="Najar F."/>
            <person name="Zhan M."/>
            <person name="Ren Q."/>
            <person name="Zhu H."/>
            <person name="Qi S."/>
            <person name="Kenton S.M."/>
            <person name="Lai H."/>
            <person name="White J.D."/>
            <person name="Clifton S."/>
            <person name="Roe B.A."/>
            <person name="Dyer D.W."/>
        </authorList>
    </citation>
    <scope>NUCLEOTIDE SEQUENCE [LARGE SCALE GENOMIC DNA]</scope>
    <source>
        <strain>ATCC 700825 / FA 1090</strain>
    </source>
</reference>